<name>PARE2_MYCTO</name>
<gene>
    <name type="primary">parE2</name>
    <name type="ordered locus">MT2200</name>
</gene>
<organism>
    <name type="scientific">Mycobacterium tuberculosis (strain CDC 1551 / Oshkosh)</name>
    <dbReference type="NCBI Taxonomy" id="83331"/>
    <lineage>
        <taxon>Bacteria</taxon>
        <taxon>Bacillati</taxon>
        <taxon>Actinomycetota</taxon>
        <taxon>Actinomycetes</taxon>
        <taxon>Mycobacteriales</taxon>
        <taxon>Mycobacteriaceae</taxon>
        <taxon>Mycobacterium</taxon>
        <taxon>Mycobacterium tuberculosis complex</taxon>
    </lineage>
</organism>
<protein>
    <recommendedName>
        <fullName>Toxin ParE2</fullName>
    </recommendedName>
</protein>
<accession>P9WHG4</accession>
<accession>L0TBG4</accession>
<accession>O06233</accession>
<accession>Q7D7G6</accession>
<evidence type="ECO:0000250" key="1"/>
<evidence type="ECO:0000305" key="2"/>
<feature type="chain" id="PRO_0000428191" description="Toxin ParE2">
    <location>
        <begin position="1"/>
        <end position="105"/>
    </location>
</feature>
<sequence length="105" mass="12313">MTRRLRVHNGVEDDLFEAFSYYADAAPDQIDRLYNLFVDAVTKRIPQAPNAFAPLFKHYRHIYLRPFRYYVAYRTTDEAIDILAVRHGMENPNAVEAEISGRTFE</sequence>
<proteinExistence type="inferred from homology"/>
<comment type="function">
    <text evidence="1">Toxic component of a type II toxin-antitoxin (TA) system. Its toxic effect is neutralized by coexpression with cognate antitoxin ParD2 (By similarity).</text>
</comment>
<comment type="similarity">
    <text evidence="2">Belongs to the RelE toxin family.</text>
</comment>
<reference key="1">
    <citation type="journal article" date="2002" name="J. Bacteriol.">
        <title>Whole-genome comparison of Mycobacterium tuberculosis clinical and laboratory strains.</title>
        <authorList>
            <person name="Fleischmann R.D."/>
            <person name="Alland D."/>
            <person name="Eisen J.A."/>
            <person name="Carpenter L."/>
            <person name="White O."/>
            <person name="Peterson J.D."/>
            <person name="DeBoy R.T."/>
            <person name="Dodson R.J."/>
            <person name="Gwinn M.L."/>
            <person name="Haft D.H."/>
            <person name="Hickey E.K."/>
            <person name="Kolonay J.F."/>
            <person name="Nelson W.C."/>
            <person name="Umayam L.A."/>
            <person name="Ermolaeva M.D."/>
            <person name="Salzberg S.L."/>
            <person name="Delcher A."/>
            <person name="Utterback T.R."/>
            <person name="Weidman J.F."/>
            <person name="Khouri H.M."/>
            <person name="Gill J."/>
            <person name="Mikula A."/>
            <person name="Bishai W."/>
            <person name="Jacobs W.R. Jr."/>
            <person name="Venter J.C."/>
            <person name="Fraser C.M."/>
        </authorList>
    </citation>
    <scope>NUCLEOTIDE SEQUENCE [LARGE SCALE GENOMIC DNA]</scope>
    <source>
        <strain>CDC 1551 / Oshkosh</strain>
    </source>
</reference>
<dbReference type="EMBL" id="AE000516">
    <property type="protein sequence ID" value="AAK46484.1"/>
    <property type="molecule type" value="Genomic_DNA"/>
</dbReference>
<dbReference type="PIR" id="B70578">
    <property type="entry name" value="B70578"/>
</dbReference>
<dbReference type="RefSeq" id="WP_003411124.1">
    <property type="nucleotide sequence ID" value="NZ_KK341227.1"/>
</dbReference>
<dbReference type="SMR" id="P9WHG4"/>
<dbReference type="KEGG" id="mtc:MT2200"/>
<dbReference type="PATRIC" id="fig|83331.31.peg.2373"/>
<dbReference type="HOGENOM" id="CLU_2233587_0_0_11"/>
<dbReference type="Proteomes" id="UP000001020">
    <property type="component" value="Chromosome"/>
</dbReference>
<dbReference type="Gene3D" id="3.30.2310.20">
    <property type="entry name" value="RelE-like"/>
    <property type="match status" value="1"/>
</dbReference>
<dbReference type="InterPro" id="IPR007712">
    <property type="entry name" value="RelE/ParE_toxin"/>
</dbReference>
<dbReference type="InterPro" id="IPR035093">
    <property type="entry name" value="RelE/ParE_toxin_dom_sf"/>
</dbReference>
<dbReference type="InterPro" id="IPR051803">
    <property type="entry name" value="TA_system_RelE-like_toxin"/>
</dbReference>
<dbReference type="PANTHER" id="PTHR33755">
    <property type="entry name" value="TOXIN PARE1-RELATED"/>
    <property type="match status" value="1"/>
</dbReference>
<dbReference type="PANTHER" id="PTHR33755:SF8">
    <property type="entry name" value="TOXIN PARE2"/>
    <property type="match status" value="1"/>
</dbReference>
<dbReference type="Pfam" id="PF05016">
    <property type="entry name" value="ParE_toxin"/>
    <property type="match status" value="1"/>
</dbReference>
<keyword id="KW-1185">Reference proteome</keyword>
<keyword id="KW-1277">Toxin-antitoxin system</keyword>